<dbReference type="EMBL" id="L22579">
    <property type="protein sequence ID" value="AAA60863.1"/>
    <property type="molecule type" value="Genomic_DNA"/>
</dbReference>
<dbReference type="PIR" id="T28553">
    <property type="entry name" value="T28553"/>
</dbReference>
<dbReference type="RefSeq" id="NP_042159.1">
    <property type="nucleotide sequence ID" value="NC_001611.1"/>
</dbReference>
<dbReference type="SMR" id="P0DOQ8"/>
<dbReference type="GeneID" id="1486486"/>
<dbReference type="KEGG" id="vg:1486486"/>
<dbReference type="Proteomes" id="UP000119805">
    <property type="component" value="Segment"/>
</dbReference>
<dbReference type="GO" id="GO:0030430">
    <property type="term" value="C:host cell cytoplasm"/>
    <property type="evidence" value="ECO:0007669"/>
    <property type="project" value="UniProtKB-SubCell"/>
</dbReference>
<dbReference type="InterPro" id="IPR007755">
    <property type="entry name" value="Poxvirus_A11"/>
</dbReference>
<dbReference type="Pfam" id="PF05061">
    <property type="entry name" value="Pox_A11"/>
    <property type="match status" value="1"/>
</dbReference>
<sequence length="319" mass="36234">MTTVPVTDIQNDLITEFSEDNYPSNKNYEITLRQMSILTHVNNVVDREHNAAVVSSPEEISSQLNEDLFPDDDSPATIIERVQQPHTTIIDDTPPPTFRRELLISEQRQQREKRFNITVSKNAEAIMESRSMITSMPTQTPSLGVVYDKDKRIQMLEDEVVNLRNQQSNTKSSNNLDNFTRILFGKTPYKSTEVNKRIAIVNYANLNGSPLSVEDLDVCSEDEIDRIYKTIKQYHESRKRKIIVTNVIIIVINIIEQALLKLGFDEIKGLSTDITSEIIDVEIGDDCDAVASKLGIGNSPVLNIVLFILKIFVKRIKII</sequence>
<evidence type="ECO:0000250" key="1">
    <source>
        <dbReference type="UniProtKB" id="Q80HV8"/>
    </source>
</evidence>
<evidence type="ECO:0000255" key="2"/>
<evidence type="ECO:0000305" key="3"/>
<comment type="function">
    <text evidence="1">Required for viral crescent formation early during virus morphogenesis.</text>
</comment>
<comment type="subunit">
    <text evidence="1">Homomultimer. Interacts with OPG160.</text>
</comment>
<comment type="subcellular location">
    <subcellularLocation>
        <location evidence="1">Host cytoplasm</location>
    </subcellularLocation>
    <text evidence="1">Localizes to the cytoplasmic viral factory. Not incorporated into virus particles. Does not seem to be a transmembrane protein.</text>
</comment>
<comment type="induction">
    <text>Expressed in the late phase of the viral replicative cycle.</text>
</comment>
<comment type="PTM">
    <text evidence="1">Phosphorylated by a OPG054-independent mechanism.</text>
</comment>
<comment type="similarity">
    <text evidence="3">Belongs to the orthopoxvirus OPG137 family.</text>
</comment>
<keyword id="KW-0175">Coiled coil</keyword>
<keyword id="KW-1035">Host cytoplasm</keyword>
<keyword id="KW-0426">Late protein</keyword>
<keyword id="KW-0597">Phosphoprotein</keyword>
<reference key="1">
    <citation type="journal article" date="1993" name="Nature">
        <title>Potential virulence determinants in terminal regions of variola smallpox virus genome.</title>
        <authorList>
            <person name="Massung R.F."/>
            <person name="Esposito J.J."/>
            <person name="Liu L.I."/>
            <person name="Qi J."/>
            <person name="Utterback T.R."/>
            <person name="Knight J.C."/>
            <person name="Aubin L."/>
            <person name="Yuran T.E."/>
            <person name="Parsons J.M."/>
            <person name="Loparev V.N."/>
            <person name="Selivanov N.A."/>
            <person name="Cavallaro K.F."/>
            <person name="Kerlavage A.R."/>
            <person name="Mahy B.W.J."/>
            <person name="Venter J.C."/>
        </authorList>
    </citation>
    <scope>NUCLEOTIDE SEQUENCE [GENOMIC DNA]</scope>
    <source>
        <strain>Bangladesh-1975</strain>
    </source>
</reference>
<proteinExistence type="evidence at transcript level"/>
<accession>P0DOQ8</accession>
<accession>P33836</accession>
<organismHost>
    <name type="scientific">Homo sapiens</name>
    <name type="common">Human</name>
    <dbReference type="NCBI Taxonomy" id="9606"/>
</organismHost>
<protein>
    <recommendedName>
        <fullName>Protein OPG137</fullName>
    </recommendedName>
</protein>
<organism>
    <name type="scientific">Variola virus</name>
    <dbReference type="NCBI Taxonomy" id="10255"/>
    <lineage>
        <taxon>Viruses</taxon>
        <taxon>Varidnaviria</taxon>
        <taxon>Bamfordvirae</taxon>
        <taxon>Nucleocytoviricota</taxon>
        <taxon>Pokkesviricetes</taxon>
        <taxon>Chitovirales</taxon>
        <taxon>Poxviridae</taxon>
        <taxon>Chordopoxvirinae</taxon>
        <taxon>Orthopoxvirus</taxon>
    </lineage>
</organism>
<name>PG137_VARV</name>
<gene>
    <name type="primary">OPG137</name>
    <name type="ORF">A11R</name>
</gene>
<feature type="chain" id="PRO_0000448151" description="Protein OPG137">
    <location>
        <begin position="1"/>
        <end position="319"/>
    </location>
</feature>
<feature type="coiled-coil region" evidence="2">
    <location>
        <begin position="146"/>
        <end position="173"/>
    </location>
</feature>